<reference key="1">
    <citation type="journal article" date="2008" name="J. Bacteriol.">
        <title>Complete genome sequence of the mosquitocidal bacterium Bacillus sphaericus C3-41 and comparison with those of closely related Bacillus species.</title>
        <authorList>
            <person name="Hu X."/>
            <person name="Fan W."/>
            <person name="Han B."/>
            <person name="Liu H."/>
            <person name="Zheng D."/>
            <person name="Li Q."/>
            <person name="Dong W."/>
            <person name="Yan J."/>
            <person name="Gao M."/>
            <person name="Berry C."/>
            <person name="Yuan Z."/>
        </authorList>
    </citation>
    <scope>NUCLEOTIDE SEQUENCE [LARGE SCALE GENOMIC DNA]</scope>
    <source>
        <strain>C3-41</strain>
    </source>
</reference>
<proteinExistence type="inferred from homology"/>
<protein>
    <recommendedName>
        <fullName evidence="1">NAD kinase</fullName>
        <ecNumber evidence="1">2.7.1.23</ecNumber>
    </recommendedName>
    <alternativeName>
        <fullName evidence="1">ATP-dependent NAD kinase</fullName>
    </alternativeName>
</protein>
<sequence length="264" mass="29586">MKFAIQSRRDAQSNELMELAKTYLQDFGLTYDEEAPEIVVSIGGDGTLLHAFHRYSHLLDQVAFVGIHTGHLGFYADWKPSELEKLVLSIAKKDFNVVEYPLLEVKVEHHNAASNTYLALNEATVKSPDVTLVMDVELNGNQFERNRGDGHSVSTPSGSTAYNKALGGAIIHPTLAALQITEIASINNRVFRTVGSPLILPAHHHCVLRPVNEQNFNMTVDHLQITQGDVKAIVFNVANERVRFARFRPFPFWERVHESFVANE</sequence>
<evidence type="ECO:0000255" key="1">
    <source>
        <dbReference type="HAMAP-Rule" id="MF_00361"/>
    </source>
</evidence>
<comment type="function">
    <text evidence="1">Involved in the regulation of the intracellular balance of NAD and NADP, and is a key enzyme in the biosynthesis of NADP. Catalyzes specifically the phosphorylation on 2'-hydroxyl of the adenosine moiety of NAD to yield NADP.</text>
</comment>
<comment type="catalytic activity">
    <reaction evidence="1">
        <text>NAD(+) + ATP = ADP + NADP(+) + H(+)</text>
        <dbReference type="Rhea" id="RHEA:18629"/>
        <dbReference type="ChEBI" id="CHEBI:15378"/>
        <dbReference type="ChEBI" id="CHEBI:30616"/>
        <dbReference type="ChEBI" id="CHEBI:57540"/>
        <dbReference type="ChEBI" id="CHEBI:58349"/>
        <dbReference type="ChEBI" id="CHEBI:456216"/>
        <dbReference type="EC" id="2.7.1.23"/>
    </reaction>
</comment>
<comment type="cofactor">
    <cofactor evidence="1">
        <name>a divalent metal cation</name>
        <dbReference type="ChEBI" id="CHEBI:60240"/>
    </cofactor>
</comment>
<comment type="subcellular location">
    <subcellularLocation>
        <location evidence="1">Cytoplasm</location>
    </subcellularLocation>
</comment>
<comment type="similarity">
    <text evidence="1">Belongs to the NAD kinase family.</text>
</comment>
<accession>B1HNY3</accession>
<name>NADK_LYSSC</name>
<organism>
    <name type="scientific">Lysinibacillus sphaericus (strain C3-41)</name>
    <dbReference type="NCBI Taxonomy" id="444177"/>
    <lineage>
        <taxon>Bacteria</taxon>
        <taxon>Bacillati</taxon>
        <taxon>Bacillota</taxon>
        <taxon>Bacilli</taxon>
        <taxon>Bacillales</taxon>
        <taxon>Bacillaceae</taxon>
        <taxon>Lysinibacillus</taxon>
    </lineage>
</organism>
<dbReference type="EC" id="2.7.1.23" evidence="1"/>
<dbReference type="EMBL" id="CP000817">
    <property type="protein sequence ID" value="ACA38835.1"/>
    <property type="molecule type" value="Genomic_DNA"/>
</dbReference>
<dbReference type="RefSeq" id="WP_012292964.1">
    <property type="nucleotide sequence ID" value="NC_010382.1"/>
</dbReference>
<dbReference type="SMR" id="B1HNY3"/>
<dbReference type="EnsemblBacteria" id="ACA38835">
    <property type="protein sequence ID" value="ACA38835"/>
    <property type="gene ID" value="Bsph_1227"/>
</dbReference>
<dbReference type="KEGG" id="lsp:Bsph_1227"/>
<dbReference type="HOGENOM" id="CLU_008831_0_3_9"/>
<dbReference type="Proteomes" id="UP000002164">
    <property type="component" value="Chromosome"/>
</dbReference>
<dbReference type="GO" id="GO:0005737">
    <property type="term" value="C:cytoplasm"/>
    <property type="evidence" value="ECO:0007669"/>
    <property type="project" value="UniProtKB-SubCell"/>
</dbReference>
<dbReference type="GO" id="GO:0005524">
    <property type="term" value="F:ATP binding"/>
    <property type="evidence" value="ECO:0007669"/>
    <property type="project" value="UniProtKB-KW"/>
</dbReference>
<dbReference type="GO" id="GO:0046872">
    <property type="term" value="F:metal ion binding"/>
    <property type="evidence" value="ECO:0007669"/>
    <property type="project" value="UniProtKB-UniRule"/>
</dbReference>
<dbReference type="GO" id="GO:0051287">
    <property type="term" value="F:NAD binding"/>
    <property type="evidence" value="ECO:0007669"/>
    <property type="project" value="UniProtKB-ARBA"/>
</dbReference>
<dbReference type="GO" id="GO:0003951">
    <property type="term" value="F:NAD+ kinase activity"/>
    <property type="evidence" value="ECO:0007669"/>
    <property type="project" value="UniProtKB-UniRule"/>
</dbReference>
<dbReference type="GO" id="GO:0019674">
    <property type="term" value="P:NAD metabolic process"/>
    <property type="evidence" value="ECO:0007669"/>
    <property type="project" value="InterPro"/>
</dbReference>
<dbReference type="GO" id="GO:0006741">
    <property type="term" value="P:NADP biosynthetic process"/>
    <property type="evidence" value="ECO:0007669"/>
    <property type="project" value="UniProtKB-UniRule"/>
</dbReference>
<dbReference type="FunFam" id="2.60.200.30:FF:000002">
    <property type="entry name" value="NAD kinase"/>
    <property type="match status" value="1"/>
</dbReference>
<dbReference type="Gene3D" id="3.40.50.10330">
    <property type="entry name" value="Probable inorganic polyphosphate/atp-NAD kinase, domain 1"/>
    <property type="match status" value="1"/>
</dbReference>
<dbReference type="Gene3D" id="2.60.200.30">
    <property type="entry name" value="Probable inorganic polyphosphate/atp-NAD kinase, domain 2"/>
    <property type="match status" value="1"/>
</dbReference>
<dbReference type="HAMAP" id="MF_00361">
    <property type="entry name" value="NAD_kinase"/>
    <property type="match status" value="1"/>
</dbReference>
<dbReference type="InterPro" id="IPR017438">
    <property type="entry name" value="ATP-NAD_kinase_N"/>
</dbReference>
<dbReference type="InterPro" id="IPR017437">
    <property type="entry name" value="ATP-NAD_kinase_PpnK-typ_C"/>
</dbReference>
<dbReference type="InterPro" id="IPR016064">
    <property type="entry name" value="NAD/diacylglycerol_kinase_sf"/>
</dbReference>
<dbReference type="InterPro" id="IPR002504">
    <property type="entry name" value="NADK"/>
</dbReference>
<dbReference type="NCBIfam" id="NF003424">
    <property type="entry name" value="PRK04885.1"/>
    <property type="match status" value="1"/>
</dbReference>
<dbReference type="PANTHER" id="PTHR20275">
    <property type="entry name" value="NAD KINASE"/>
    <property type="match status" value="1"/>
</dbReference>
<dbReference type="PANTHER" id="PTHR20275:SF0">
    <property type="entry name" value="NAD KINASE"/>
    <property type="match status" value="1"/>
</dbReference>
<dbReference type="Pfam" id="PF01513">
    <property type="entry name" value="NAD_kinase"/>
    <property type="match status" value="1"/>
</dbReference>
<dbReference type="Pfam" id="PF20143">
    <property type="entry name" value="NAD_kinase_C"/>
    <property type="match status" value="1"/>
</dbReference>
<dbReference type="SUPFAM" id="SSF111331">
    <property type="entry name" value="NAD kinase/diacylglycerol kinase-like"/>
    <property type="match status" value="1"/>
</dbReference>
<gene>
    <name evidence="1" type="primary">nadK</name>
    <name type="ordered locus">Bsph_1227</name>
</gene>
<feature type="chain" id="PRO_1000120872" description="NAD kinase">
    <location>
        <begin position="1"/>
        <end position="264"/>
    </location>
</feature>
<feature type="active site" description="Proton acceptor" evidence="1">
    <location>
        <position position="45"/>
    </location>
</feature>
<feature type="binding site" evidence="1">
    <location>
        <begin position="45"/>
        <end position="46"/>
    </location>
    <ligand>
        <name>NAD(+)</name>
        <dbReference type="ChEBI" id="CHEBI:57540"/>
    </ligand>
</feature>
<feature type="binding site" evidence="1">
    <location>
        <position position="50"/>
    </location>
    <ligand>
        <name>NAD(+)</name>
        <dbReference type="ChEBI" id="CHEBI:57540"/>
    </ligand>
</feature>
<feature type="binding site" evidence="1">
    <location>
        <begin position="121"/>
        <end position="122"/>
    </location>
    <ligand>
        <name>NAD(+)</name>
        <dbReference type="ChEBI" id="CHEBI:57540"/>
    </ligand>
</feature>
<feature type="binding site" evidence="1">
    <location>
        <position position="147"/>
    </location>
    <ligand>
        <name>NAD(+)</name>
        <dbReference type="ChEBI" id="CHEBI:57540"/>
    </ligand>
</feature>
<feature type="binding site" evidence="1">
    <location>
        <position position="149"/>
    </location>
    <ligand>
        <name>NAD(+)</name>
        <dbReference type="ChEBI" id="CHEBI:57540"/>
    </ligand>
</feature>
<feature type="binding site" evidence="1">
    <location>
        <position position="184"/>
    </location>
    <ligand>
        <name>NAD(+)</name>
        <dbReference type="ChEBI" id="CHEBI:57540"/>
    </ligand>
</feature>
<feature type="binding site" evidence="1">
    <location>
        <position position="224"/>
    </location>
    <ligand>
        <name>NAD(+)</name>
        <dbReference type="ChEBI" id="CHEBI:57540"/>
    </ligand>
</feature>
<keyword id="KW-0067">ATP-binding</keyword>
<keyword id="KW-0963">Cytoplasm</keyword>
<keyword id="KW-0418">Kinase</keyword>
<keyword id="KW-0520">NAD</keyword>
<keyword id="KW-0521">NADP</keyword>
<keyword id="KW-0547">Nucleotide-binding</keyword>
<keyword id="KW-0808">Transferase</keyword>